<protein>
    <recommendedName>
        <fullName evidence="1">Ribulose bisphosphate carboxylase large chain</fullName>
        <shortName evidence="1">RuBisCO large subunit</shortName>
        <ecNumber evidence="1">4.1.1.39</ecNumber>
    </recommendedName>
</protein>
<organism>
    <name type="scientific">Chrysotila carterae</name>
    <name type="common">Marine alga</name>
    <name type="synonym">Syracosphaera carterae</name>
    <dbReference type="NCBI Taxonomy" id="13221"/>
    <lineage>
        <taxon>Eukaryota</taxon>
        <taxon>Haptista</taxon>
        <taxon>Haptophyta</taxon>
        <taxon>Prymnesiophyceae</taxon>
        <taxon>Isochrysidales</taxon>
        <taxon>Isochrysidaceae</taxon>
        <taxon>Chrysotila</taxon>
    </lineage>
</organism>
<name>RBL_CHRCT</name>
<dbReference type="EC" id="4.1.1.39" evidence="1"/>
<dbReference type="EMBL" id="D11140">
    <property type="protein sequence ID" value="BAA39175.1"/>
    <property type="molecule type" value="Genomic_DNA"/>
</dbReference>
<dbReference type="SMR" id="Q08051"/>
<dbReference type="GO" id="GO:0009507">
    <property type="term" value="C:chloroplast"/>
    <property type="evidence" value="ECO:0007669"/>
    <property type="project" value="UniProtKB-SubCell"/>
</dbReference>
<dbReference type="GO" id="GO:0000287">
    <property type="term" value="F:magnesium ion binding"/>
    <property type="evidence" value="ECO:0007669"/>
    <property type="project" value="UniProtKB-UniRule"/>
</dbReference>
<dbReference type="GO" id="GO:0004497">
    <property type="term" value="F:monooxygenase activity"/>
    <property type="evidence" value="ECO:0007669"/>
    <property type="project" value="UniProtKB-KW"/>
</dbReference>
<dbReference type="GO" id="GO:0016984">
    <property type="term" value="F:ribulose-bisphosphate carboxylase activity"/>
    <property type="evidence" value="ECO:0007669"/>
    <property type="project" value="UniProtKB-UniRule"/>
</dbReference>
<dbReference type="GO" id="GO:0019253">
    <property type="term" value="P:reductive pentose-phosphate cycle"/>
    <property type="evidence" value="ECO:0007669"/>
    <property type="project" value="UniProtKB-UniRule"/>
</dbReference>
<dbReference type="CDD" id="cd08212">
    <property type="entry name" value="RuBisCO_large_I"/>
    <property type="match status" value="1"/>
</dbReference>
<dbReference type="Gene3D" id="3.20.20.110">
    <property type="entry name" value="Ribulose bisphosphate carboxylase, large subunit, C-terminal domain"/>
    <property type="match status" value="1"/>
</dbReference>
<dbReference type="Gene3D" id="3.30.70.150">
    <property type="entry name" value="RuBisCO large subunit, N-terminal domain"/>
    <property type="match status" value="1"/>
</dbReference>
<dbReference type="HAMAP" id="MF_01338">
    <property type="entry name" value="RuBisCO_L_type1"/>
    <property type="match status" value="1"/>
</dbReference>
<dbReference type="InterPro" id="IPR033966">
    <property type="entry name" value="RuBisCO"/>
</dbReference>
<dbReference type="InterPro" id="IPR020878">
    <property type="entry name" value="RuBisCo_large_chain_AS"/>
</dbReference>
<dbReference type="InterPro" id="IPR000685">
    <property type="entry name" value="RuBisCO_lsu_C"/>
</dbReference>
<dbReference type="InterPro" id="IPR036376">
    <property type="entry name" value="RuBisCO_lsu_C_sf"/>
</dbReference>
<dbReference type="InterPro" id="IPR017443">
    <property type="entry name" value="RuBisCO_lsu_fd_N"/>
</dbReference>
<dbReference type="InterPro" id="IPR036422">
    <property type="entry name" value="RuBisCO_lsu_N_sf"/>
</dbReference>
<dbReference type="InterPro" id="IPR020888">
    <property type="entry name" value="RuBisCO_lsuI"/>
</dbReference>
<dbReference type="NCBIfam" id="NF003252">
    <property type="entry name" value="PRK04208.1"/>
    <property type="match status" value="1"/>
</dbReference>
<dbReference type="PANTHER" id="PTHR42704">
    <property type="entry name" value="RIBULOSE BISPHOSPHATE CARBOXYLASE"/>
    <property type="match status" value="1"/>
</dbReference>
<dbReference type="PANTHER" id="PTHR42704:SF17">
    <property type="entry name" value="RIBULOSE BISPHOSPHATE CARBOXYLASE LARGE CHAIN"/>
    <property type="match status" value="1"/>
</dbReference>
<dbReference type="Pfam" id="PF00016">
    <property type="entry name" value="RuBisCO_large"/>
    <property type="match status" value="1"/>
</dbReference>
<dbReference type="Pfam" id="PF02788">
    <property type="entry name" value="RuBisCO_large_N"/>
    <property type="match status" value="1"/>
</dbReference>
<dbReference type="SFLD" id="SFLDG01052">
    <property type="entry name" value="RuBisCO"/>
    <property type="match status" value="1"/>
</dbReference>
<dbReference type="SFLD" id="SFLDS00014">
    <property type="entry name" value="RuBisCO"/>
    <property type="match status" value="1"/>
</dbReference>
<dbReference type="SFLD" id="SFLDG00301">
    <property type="entry name" value="RuBisCO-like_proteins"/>
    <property type="match status" value="1"/>
</dbReference>
<dbReference type="SUPFAM" id="SSF51649">
    <property type="entry name" value="RuBisCo, C-terminal domain"/>
    <property type="match status" value="1"/>
</dbReference>
<dbReference type="SUPFAM" id="SSF54966">
    <property type="entry name" value="RuBisCO, large subunit, small (N-terminal) domain"/>
    <property type="match status" value="1"/>
</dbReference>
<dbReference type="PROSITE" id="PS00157">
    <property type="entry name" value="RUBISCO_LARGE"/>
    <property type="match status" value="1"/>
</dbReference>
<feature type="chain" id="PRO_0000062567" description="Ribulose bisphosphate carboxylase large chain">
    <location>
        <begin position="1"/>
        <end position="488"/>
    </location>
</feature>
<feature type="active site" description="Proton acceptor" evidence="1">
    <location>
        <position position="179"/>
    </location>
</feature>
<feature type="active site" description="Proton acceptor" evidence="1">
    <location>
        <position position="297"/>
    </location>
</feature>
<feature type="binding site" description="in homodimeric partner" evidence="1">
    <location>
        <position position="127"/>
    </location>
    <ligand>
        <name>substrate</name>
    </ligand>
</feature>
<feature type="binding site" evidence="1">
    <location>
        <position position="177"/>
    </location>
    <ligand>
        <name>substrate</name>
    </ligand>
</feature>
<feature type="binding site" evidence="1">
    <location>
        <position position="181"/>
    </location>
    <ligand>
        <name>substrate</name>
    </ligand>
</feature>
<feature type="binding site" description="via carbamate group" evidence="1">
    <location>
        <position position="205"/>
    </location>
    <ligand>
        <name>Mg(2+)</name>
        <dbReference type="ChEBI" id="CHEBI:18420"/>
    </ligand>
</feature>
<feature type="binding site" evidence="1">
    <location>
        <position position="207"/>
    </location>
    <ligand>
        <name>Mg(2+)</name>
        <dbReference type="ChEBI" id="CHEBI:18420"/>
    </ligand>
</feature>
<feature type="binding site" evidence="1">
    <location>
        <position position="208"/>
    </location>
    <ligand>
        <name>Mg(2+)</name>
        <dbReference type="ChEBI" id="CHEBI:18420"/>
    </ligand>
</feature>
<feature type="binding site" evidence="1">
    <location>
        <position position="298"/>
    </location>
    <ligand>
        <name>substrate</name>
    </ligand>
</feature>
<feature type="binding site" evidence="1">
    <location>
        <position position="330"/>
    </location>
    <ligand>
        <name>substrate</name>
    </ligand>
</feature>
<feature type="binding site" evidence="1">
    <location>
        <position position="382"/>
    </location>
    <ligand>
        <name>substrate</name>
    </ligand>
</feature>
<feature type="site" description="Transition state stabilizer" evidence="1">
    <location>
        <position position="337"/>
    </location>
</feature>
<feature type="modified residue" description="N6-carboxylysine" evidence="1">
    <location>
        <position position="205"/>
    </location>
</feature>
<sequence>MSQAVETRTRIKSERYESGVIPYAKMGYWDPEYSIKETDILALFRCTPQPGVDPVEAAAALAGESSTATWTVVWTDLLTACDLYRAKAYRVDPVPSAADTYFCYIAYDIDLFEEGSLANLTASIIGNIFGFKAVKALRLEDMRMPYALLKTYQGPATGLIVERERLDKFGRPLLGATVKPKLGLSGKNYGRVVFEGLKGGLDFLKDDENINSQPFMRYRERFLYSMEGVNHAAAVSGEVKGHYLNATAATMEDMYERAEFAKDLGSVIVMIDLVIGYTAIQSMAIWARKTDMILHLHRAGNSTYSRQKSHGMNFRVICKWMRMSGVDHIHAGTVVGKLEGDPLMIKGFYNTLLEFKSDINLPQGLFFAQDWASLRKCVPVASGGIHCGQMHQLINYLGDDVVLQFGGGTIGHPDGIQAGATANRVALECMVIARNEGRDYISEGPQILRDAAKTCGPLQTALDLWKDITFNYASTDTADFVETPTANR</sequence>
<accession>Q08051</accession>
<comment type="function">
    <text evidence="1">RuBisCO catalyzes two reactions: the carboxylation of D-ribulose 1,5-bisphosphate, the primary event in carbon dioxide fixation, as well as the oxidative fragmentation of the pentose substrate in the photorespiration process. Both reactions occur simultaneously and in competition at the same active site.</text>
</comment>
<comment type="catalytic activity">
    <reaction evidence="1">
        <text>2 (2R)-3-phosphoglycerate + 2 H(+) = D-ribulose 1,5-bisphosphate + CO2 + H2O</text>
        <dbReference type="Rhea" id="RHEA:23124"/>
        <dbReference type="ChEBI" id="CHEBI:15377"/>
        <dbReference type="ChEBI" id="CHEBI:15378"/>
        <dbReference type="ChEBI" id="CHEBI:16526"/>
        <dbReference type="ChEBI" id="CHEBI:57870"/>
        <dbReference type="ChEBI" id="CHEBI:58272"/>
        <dbReference type="EC" id="4.1.1.39"/>
    </reaction>
</comment>
<comment type="catalytic activity">
    <reaction evidence="1">
        <text>D-ribulose 1,5-bisphosphate + O2 = 2-phosphoglycolate + (2R)-3-phosphoglycerate + 2 H(+)</text>
        <dbReference type="Rhea" id="RHEA:36631"/>
        <dbReference type="ChEBI" id="CHEBI:15378"/>
        <dbReference type="ChEBI" id="CHEBI:15379"/>
        <dbReference type="ChEBI" id="CHEBI:57870"/>
        <dbReference type="ChEBI" id="CHEBI:58033"/>
        <dbReference type="ChEBI" id="CHEBI:58272"/>
    </reaction>
</comment>
<comment type="cofactor">
    <cofactor evidence="1">
        <name>Mg(2+)</name>
        <dbReference type="ChEBI" id="CHEBI:18420"/>
    </cofactor>
    <text evidence="1">Binds 1 Mg(2+) ion per subunit.</text>
</comment>
<comment type="subunit">
    <text evidence="1">Heterohexadecamer of 8 large chains and 8 small chains.</text>
</comment>
<comment type="subcellular location">
    <subcellularLocation>
        <location>Plastid</location>
        <location>Chloroplast</location>
    </subcellularLocation>
</comment>
<comment type="miscellaneous">
    <text evidence="1">The basic functional RuBisCO is composed of a large chain homodimer in a 'head-to-tail' conformation. In form I RuBisCO this homodimer is arranged in a barrel-like tetramer with the small subunits forming a tetrameric 'cap' on each end of the 'barrel'.</text>
</comment>
<comment type="similarity">
    <text evidence="1">Belongs to the RuBisCO large chain family. Type I subfamily.</text>
</comment>
<proteinExistence type="inferred from homology"/>
<evidence type="ECO:0000255" key="1">
    <source>
        <dbReference type="HAMAP-Rule" id="MF_01338"/>
    </source>
</evidence>
<gene>
    <name evidence="1" type="primary">rbcL</name>
</gene>
<keyword id="KW-0113">Calvin cycle</keyword>
<keyword id="KW-0120">Carbon dioxide fixation</keyword>
<keyword id="KW-0150">Chloroplast</keyword>
<keyword id="KW-0456">Lyase</keyword>
<keyword id="KW-0460">Magnesium</keyword>
<keyword id="KW-0479">Metal-binding</keyword>
<keyword id="KW-0503">Monooxygenase</keyword>
<keyword id="KW-0560">Oxidoreductase</keyword>
<keyword id="KW-0601">Photorespiration</keyword>
<keyword id="KW-0602">Photosynthesis</keyword>
<keyword id="KW-0934">Plastid</keyword>
<reference key="1">
    <citation type="journal article" date="1993" name="J. Phycol.">
        <title>Structure and cotranscription of the plastid-encoded rbcL and rbcS genes of Pleurochrysis carterae (prymnesiophyta).</title>
        <authorList>
            <person name="Fujiwara S."/>
            <person name="Iwahashi H."/>
            <person name="Someya J."/>
            <person name="Nishikawa S."/>
            <person name="Minaka N."/>
        </authorList>
    </citation>
    <scope>NUCLEOTIDE SEQUENCE [GENOMIC DNA]</scope>
</reference>
<geneLocation type="chloroplast"/>